<protein>
    <recommendedName>
        <fullName evidence="1">Translation initiation factor IF-3</fullName>
    </recommendedName>
</protein>
<feature type="chain" id="PRO_0000177510" description="Translation initiation factor IF-3">
    <location>
        <begin position="1"/>
        <end position="173"/>
    </location>
</feature>
<comment type="function">
    <text evidence="1">IF-3 binds to the 30S ribosomal subunit and shifts the equilibrium between 70S ribosomes and their 50S and 30S subunits in favor of the free subunits, thus enhancing the availability of 30S subunits on which protein synthesis initiation begins.</text>
</comment>
<comment type="subunit">
    <text evidence="1">Monomer.</text>
</comment>
<comment type="subcellular location">
    <subcellularLocation>
        <location evidence="1">Cytoplasm</location>
    </subcellularLocation>
</comment>
<comment type="similarity">
    <text evidence="1">Belongs to the IF-3 family.</text>
</comment>
<dbReference type="EMBL" id="AE015927">
    <property type="protein sequence ID" value="AAO36764.1"/>
    <property type="molecule type" value="Genomic_DNA"/>
</dbReference>
<dbReference type="SMR" id="Q891T1"/>
<dbReference type="STRING" id="212717.CTC_02285"/>
<dbReference type="KEGG" id="ctc:CTC_02285"/>
<dbReference type="HOGENOM" id="CLU_054919_3_2_9"/>
<dbReference type="OrthoDB" id="9806014at2"/>
<dbReference type="Proteomes" id="UP000001412">
    <property type="component" value="Chromosome"/>
</dbReference>
<dbReference type="GO" id="GO:0005829">
    <property type="term" value="C:cytosol"/>
    <property type="evidence" value="ECO:0007669"/>
    <property type="project" value="TreeGrafter"/>
</dbReference>
<dbReference type="GO" id="GO:0016020">
    <property type="term" value="C:membrane"/>
    <property type="evidence" value="ECO:0007669"/>
    <property type="project" value="TreeGrafter"/>
</dbReference>
<dbReference type="GO" id="GO:0043022">
    <property type="term" value="F:ribosome binding"/>
    <property type="evidence" value="ECO:0007669"/>
    <property type="project" value="TreeGrafter"/>
</dbReference>
<dbReference type="GO" id="GO:0003743">
    <property type="term" value="F:translation initiation factor activity"/>
    <property type="evidence" value="ECO:0007669"/>
    <property type="project" value="UniProtKB-UniRule"/>
</dbReference>
<dbReference type="GO" id="GO:0032790">
    <property type="term" value="P:ribosome disassembly"/>
    <property type="evidence" value="ECO:0007669"/>
    <property type="project" value="TreeGrafter"/>
</dbReference>
<dbReference type="FunFam" id="3.10.20.80:FF:000001">
    <property type="entry name" value="Translation initiation factor IF-3"/>
    <property type="match status" value="1"/>
</dbReference>
<dbReference type="FunFam" id="3.30.110.10:FF:000001">
    <property type="entry name" value="Translation initiation factor IF-3"/>
    <property type="match status" value="1"/>
</dbReference>
<dbReference type="Gene3D" id="3.30.110.10">
    <property type="entry name" value="Translation initiation factor 3 (IF-3), C-terminal domain"/>
    <property type="match status" value="1"/>
</dbReference>
<dbReference type="Gene3D" id="3.10.20.80">
    <property type="entry name" value="Translation initiation factor 3 (IF-3), N-terminal domain"/>
    <property type="match status" value="1"/>
</dbReference>
<dbReference type="HAMAP" id="MF_00080">
    <property type="entry name" value="IF_3"/>
    <property type="match status" value="1"/>
</dbReference>
<dbReference type="InterPro" id="IPR036788">
    <property type="entry name" value="T_IF-3_C_sf"/>
</dbReference>
<dbReference type="InterPro" id="IPR036787">
    <property type="entry name" value="T_IF-3_N_sf"/>
</dbReference>
<dbReference type="InterPro" id="IPR019813">
    <property type="entry name" value="Translation_initiation_fac3_CS"/>
</dbReference>
<dbReference type="InterPro" id="IPR001288">
    <property type="entry name" value="Translation_initiation_fac_3"/>
</dbReference>
<dbReference type="InterPro" id="IPR019815">
    <property type="entry name" value="Translation_initiation_fac_3_C"/>
</dbReference>
<dbReference type="InterPro" id="IPR019814">
    <property type="entry name" value="Translation_initiation_fac_3_N"/>
</dbReference>
<dbReference type="NCBIfam" id="TIGR00168">
    <property type="entry name" value="infC"/>
    <property type="match status" value="1"/>
</dbReference>
<dbReference type="PANTHER" id="PTHR10938">
    <property type="entry name" value="TRANSLATION INITIATION FACTOR IF-3"/>
    <property type="match status" value="1"/>
</dbReference>
<dbReference type="PANTHER" id="PTHR10938:SF0">
    <property type="entry name" value="TRANSLATION INITIATION FACTOR IF-3, MITOCHONDRIAL"/>
    <property type="match status" value="1"/>
</dbReference>
<dbReference type="Pfam" id="PF00707">
    <property type="entry name" value="IF3_C"/>
    <property type="match status" value="1"/>
</dbReference>
<dbReference type="Pfam" id="PF05198">
    <property type="entry name" value="IF3_N"/>
    <property type="match status" value="1"/>
</dbReference>
<dbReference type="SUPFAM" id="SSF55200">
    <property type="entry name" value="Translation initiation factor IF3, C-terminal domain"/>
    <property type="match status" value="1"/>
</dbReference>
<dbReference type="SUPFAM" id="SSF54364">
    <property type="entry name" value="Translation initiation factor IF3, N-terminal domain"/>
    <property type="match status" value="1"/>
</dbReference>
<dbReference type="PROSITE" id="PS00938">
    <property type="entry name" value="IF3"/>
    <property type="match status" value="1"/>
</dbReference>
<name>IF3_CLOTE</name>
<proteinExistence type="inferred from homology"/>
<reference key="1">
    <citation type="journal article" date="2003" name="Proc. Natl. Acad. Sci. U.S.A.">
        <title>The genome sequence of Clostridium tetani, the causative agent of tetanus disease.</title>
        <authorList>
            <person name="Brueggemann H."/>
            <person name="Baeumer S."/>
            <person name="Fricke W.F."/>
            <person name="Wiezer A."/>
            <person name="Liesegang H."/>
            <person name="Decker I."/>
            <person name="Herzberg C."/>
            <person name="Martinez-Arias R."/>
            <person name="Merkl R."/>
            <person name="Henne A."/>
            <person name="Gottschalk G."/>
        </authorList>
    </citation>
    <scope>NUCLEOTIDE SEQUENCE [LARGE SCALE GENOMIC DNA]</scope>
    <source>
        <strain>Massachusetts / E88</strain>
    </source>
</reference>
<organism>
    <name type="scientific">Clostridium tetani (strain Massachusetts / E88)</name>
    <dbReference type="NCBI Taxonomy" id="212717"/>
    <lineage>
        <taxon>Bacteria</taxon>
        <taxon>Bacillati</taxon>
        <taxon>Bacillota</taxon>
        <taxon>Clostridia</taxon>
        <taxon>Eubacteriales</taxon>
        <taxon>Clostridiaceae</taxon>
        <taxon>Clostridium</taxon>
    </lineage>
</organism>
<evidence type="ECO:0000255" key="1">
    <source>
        <dbReference type="HAMAP-Rule" id="MF_00080"/>
    </source>
</evidence>
<accession>Q891T1</accession>
<gene>
    <name evidence="1" type="primary">infC</name>
    <name type="ordered locus">CTC_02285</name>
</gene>
<sequence>MNIIKKGFLMNEEIREKEVRVIAEDGEQLGVIPTSEALKRAEEKELDLVMIAPTGKPPVCKIMNYGKFIYEQTKKDKEAKKKQKVINVKEIRLSATIEEHDIGIKANNARKFLKAEDKVKVTVRFRGREMEHSNVVGNKILKTFLSKVEDVCVVEKPARLEGKNMTMVLAPRK</sequence>
<keyword id="KW-0963">Cytoplasm</keyword>
<keyword id="KW-0396">Initiation factor</keyword>
<keyword id="KW-0648">Protein biosynthesis</keyword>
<keyword id="KW-1185">Reference proteome</keyword>